<comment type="function">
    <text evidence="1">Pyrophosphatase that catalyzes the hydrolysis of nucleoside triphosphates to their monophosphate derivatives, with a high preference for the non-canonical purine nucleotides XTP (xanthosine triphosphate), dITP (deoxyinosine triphosphate) and ITP. Seems to function as a house-cleaning enzyme that removes non-canonical purine nucleotides from the nucleotide pool, thus preventing their incorporation into DNA/RNA and avoiding chromosomal lesions.</text>
</comment>
<comment type="catalytic activity">
    <reaction evidence="1">
        <text>XTP + H2O = XMP + diphosphate + H(+)</text>
        <dbReference type="Rhea" id="RHEA:28610"/>
        <dbReference type="ChEBI" id="CHEBI:15377"/>
        <dbReference type="ChEBI" id="CHEBI:15378"/>
        <dbReference type="ChEBI" id="CHEBI:33019"/>
        <dbReference type="ChEBI" id="CHEBI:57464"/>
        <dbReference type="ChEBI" id="CHEBI:61314"/>
        <dbReference type="EC" id="3.6.1.66"/>
    </reaction>
</comment>
<comment type="catalytic activity">
    <reaction evidence="1">
        <text>dITP + H2O = dIMP + diphosphate + H(+)</text>
        <dbReference type="Rhea" id="RHEA:28342"/>
        <dbReference type="ChEBI" id="CHEBI:15377"/>
        <dbReference type="ChEBI" id="CHEBI:15378"/>
        <dbReference type="ChEBI" id="CHEBI:33019"/>
        <dbReference type="ChEBI" id="CHEBI:61194"/>
        <dbReference type="ChEBI" id="CHEBI:61382"/>
        <dbReference type="EC" id="3.6.1.66"/>
    </reaction>
</comment>
<comment type="catalytic activity">
    <reaction evidence="1">
        <text>ITP + H2O = IMP + diphosphate + H(+)</text>
        <dbReference type="Rhea" id="RHEA:29399"/>
        <dbReference type="ChEBI" id="CHEBI:15377"/>
        <dbReference type="ChEBI" id="CHEBI:15378"/>
        <dbReference type="ChEBI" id="CHEBI:33019"/>
        <dbReference type="ChEBI" id="CHEBI:58053"/>
        <dbReference type="ChEBI" id="CHEBI:61402"/>
        <dbReference type="EC" id="3.6.1.66"/>
    </reaction>
</comment>
<comment type="cofactor">
    <cofactor evidence="1">
        <name>Mg(2+)</name>
        <dbReference type="ChEBI" id="CHEBI:18420"/>
    </cofactor>
    <text evidence="1">Binds 1 Mg(2+) ion per subunit.</text>
</comment>
<comment type="subunit">
    <text evidence="1">Homodimer.</text>
</comment>
<comment type="similarity">
    <text evidence="1">Belongs to the HAM1 NTPase family.</text>
</comment>
<organism>
    <name type="scientific">Helicobacter hepaticus (strain ATCC 51449 / 3B1)</name>
    <dbReference type="NCBI Taxonomy" id="235279"/>
    <lineage>
        <taxon>Bacteria</taxon>
        <taxon>Pseudomonadati</taxon>
        <taxon>Campylobacterota</taxon>
        <taxon>Epsilonproteobacteria</taxon>
        <taxon>Campylobacterales</taxon>
        <taxon>Helicobacteraceae</taxon>
        <taxon>Helicobacter</taxon>
    </lineage>
</organism>
<proteinExistence type="inferred from homology"/>
<sequence length="238" mass="26793">MVIVLASANQHKICEFQAMLKNVKEKVKVYAYGELLETFEIAENGNSFKENATLKVKAIYQALYTLSQSTMQENIRNLFAQPLAIIAEDSGLCVPVLNGEPGIYSARYAHHKQFASMQYKNTDEANLYCLLNALTHCAPTPAFFVAHIALIFIKPYFCTYTLPPLEQCVIEHFEGILNGEVINEMRGNEGFGYDPLFIPAEHNPQSLTLAEFDMSAKNTISHRKKALSQCINRLFDKS</sequence>
<reference key="1">
    <citation type="journal article" date="2003" name="Proc. Natl. Acad. Sci. U.S.A.">
        <title>The complete genome sequence of the carcinogenic bacterium Helicobacter hepaticus.</title>
        <authorList>
            <person name="Suerbaum S."/>
            <person name="Josenhans C."/>
            <person name="Sterzenbach T."/>
            <person name="Drescher B."/>
            <person name="Brandt P."/>
            <person name="Bell M."/>
            <person name="Droege M."/>
            <person name="Fartmann B."/>
            <person name="Fischer H.-P."/>
            <person name="Ge Z."/>
            <person name="Hoerster A."/>
            <person name="Holland R."/>
            <person name="Klein K."/>
            <person name="Koenig J."/>
            <person name="Macko L."/>
            <person name="Mendz G.L."/>
            <person name="Nyakatura G."/>
            <person name="Schauer D.B."/>
            <person name="Shen Z."/>
            <person name="Weber J."/>
            <person name="Frosch M."/>
            <person name="Fox J.G."/>
        </authorList>
    </citation>
    <scope>NUCLEOTIDE SEQUENCE [LARGE SCALE GENOMIC DNA]</scope>
    <source>
        <strain>ATCC 51449 / 3B1</strain>
    </source>
</reference>
<protein>
    <recommendedName>
        <fullName evidence="1">dITP/XTP pyrophosphatase</fullName>
        <ecNumber evidence="1">3.6.1.66</ecNumber>
    </recommendedName>
    <alternativeName>
        <fullName evidence="1">Non-canonical purine NTP pyrophosphatase</fullName>
    </alternativeName>
    <alternativeName>
        <fullName evidence="1">Non-standard purine NTP pyrophosphatase</fullName>
    </alternativeName>
    <alternativeName>
        <fullName evidence="1">Nucleoside-triphosphate diphosphatase</fullName>
    </alternativeName>
    <alternativeName>
        <fullName evidence="1">Nucleoside-triphosphate pyrophosphatase</fullName>
        <shortName evidence="1">NTPase</shortName>
    </alternativeName>
</protein>
<dbReference type="EC" id="3.6.1.66" evidence="1"/>
<dbReference type="EMBL" id="AE017125">
    <property type="protein sequence ID" value="AAP78432.1"/>
    <property type="molecule type" value="Genomic_DNA"/>
</dbReference>
<dbReference type="RefSeq" id="WP_011116674.1">
    <property type="nucleotide sequence ID" value="NC_004917.1"/>
</dbReference>
<dbReference type="SMR" id="Q7VF43"/>
<dbReference type="STRING" id="235279.HH_1835"/>
<dbReference type="KEGG" id="hhe:HH_1835"/>
<dbReference type="eggNOG" id="COG0127">
    <property type="taxonomic scope" value="Bacteria"/>
</dbReference>
<dbReference type="HOGENOM" id="CLU_082080_0_2_7"/>
<dbReference type="OrthoDB" id="9807456at2"/>
<dbReference type="Proteomes" id="UP000002495">
    <property type="component" value="Chromosome"/>
</dbReference>
<dbReference type="GO" id="GO:0005829">
    <property type="term" value="C:cytosol"/>
    <property type="evidence" value="ECO:0007669"/>
    <property type="project" value="TreeGrafter"/>
</dbReference>
<dbReference type="GO" id="GO:0035870">
    <property type="term" value="F:dITP diphosphatase activity"/>
    <property type="evidence" value="ECO:0007669"/>
    <property type="project" value="RHEA"/>
</dbReference>
<dbReference type="GO" id="GO:0036220">
    <property type="term" value="F:ITP diphosphatase activity"/>
    <property type="evidence" value="ECO:0007669"/>
    <property type="project" value="UniProtKB-EC"/>
</dbReference>
<dbReference type="GO" id="GO:0046872">
    <property type="term" value="F:metal ion binding"/>
    <property type="evidence" value="ECO:0007669"/>
    <property type="project" value="UniProtKB-KW"/>
</dbReference>
<dbReference type="GO" id="GO:0000166">
    <property type="term" value="F:nucleotide binding"/>
    <property type="evidence" value="ECO:0007669"/>
    <property type="project" value="UniProtKB-KW"/>
</dbReference>
<dbReference type="GO" id="GO:0017111">
    <property type="term" value="F:ribonucleoside triphosphate phosphatase activity"/>
    <property type="evidence" value="ECO:0007669"/>
    <property type="project" value="InterPro"/>
</dbReference>
<dbReference type="GO" id="GO:0036222">
    <property type="term" value="F:XTP diphosphatase activity"/>
    <property type="evidence" value="ECO:0007669"/>
    <property type="project" value="RHEA"/>
</dbReference>
<dbReference type="GO" id="GO:0009117">
    <property type="term" value="P:nucleotide metabolic process"/>
    <property type="evidence" value="ECO:0007669"/>
    <property type="project" value="UniProtKB-KW"/>
</dbReference>
<dbReference type="GO" id="GO:0009146">
    <property type="term" value="P:purine nucleoside triphosphate catabolic process"/>
    <property type="evidence" value="ECO:0007669"/>
    <property type="project" value="UniProtKB-UniRule"/>
</dbReference>
<dbReference type="CDD" id="cd00515">
    <property type="entry name" value="HAM1"/>
    <property type="match status" value="1"/>
</dbReference>
<dbReference type="Gene3D" id="3.90.950.10">
    <property type="match status" value="1"/>
</dbReference>
<dbReference type="HAMAP" id="MF_01405">
    <property type="entry name" value="Non_canon_purine_NTPase"/>
    <property type="match status" value="1"/>
</dbReference>
<dbReference type="InterPro" id="IPR020922">
    <property type="entry name" value="dITP/XTP_pyrophosphatase"/>
</dbReference>
<dbReference type="InterPro" id="IPR029001">
    <property type="entry name" value="ITPase-like_fam"/>
</dbReference>
<dbReference type="InterPro" id="IPR002637">
    <property type="entry name" value="RdgB/HAM1"/>
</dbReference>
<dbReference type="PANTHER" id="PTHR11067:SF9">
    <property type="entry name" value="INOSINE TRIPHOSPHATE PYROPHOSPHATASE"/>
    <property type="match status" value="1"/>
</dbReference>
<dbReference type="PANTHER" id="PTHR11067">
    <property type="entry name" value="INOSINE TRIPHOSPHATE PYROPHOSPHATASE/HAM1 PROTEIN"/>
    <property type="match status" value="1"/>
</dbReference>
<dbReference type="Pfam" id="PF01725">
    <property type="entry name" value="Ham1p_like"/>
    <property type="match status" value="1"/>
</dbReference>
<dbReference type="SUPFAM" id="SSF52972">
    <property type="entry name" value="ITPase-like"/>
    <property type="match status" value="1"/>
</dbReference>
<accession>Q7VF43</accession>
<gene>
    <name type="ordered locus">HH_1835</name>
</gene>
<feature type="chain" id="PRO_0000178175" description="dITP/XTP pyrophosphatase">
    <location>
        <begin position="1"/>
        <end position="238"/>
    </location>
</feature>
<feature type="active site" description="Proton acceptor" evidence="1">
    <location>
        <position position="89"/>
    </location>
</feature>
<feature type="binding site" evidence="1">
    <location>
        <begin position="7"/>
        <end position="12"/>
    </location>
    <ligand>
        <name>substrate</name>
    </ligand>
</feature>
<feature type="binding site" evidence="1">
    <location>
        <position position="89"/>
    </location>
    <ligand>
        <name>Mg(2+)</name>
        <dbReference type="ChEBI" id="CHEBI:18420"/>
    </ligand>
</feature>
<feature type="binding site" evidence="1">
    <location>
        <position position="90"/>
    </location>
    <ligand>
        <name>substrate</name>
    </ligand>
</feature>
<feature type="binding site" evidence="1">
    <location>
        <begin position="191"/>
        <end position="194"/>
    </location>
    <ligand>
        <name>substrate</name>
    </ligand>
</feature>
<feature type="binding site" evidence="1">
    <location>
        <position position="217"/>
    </location>
    <ligand>
        <name>substrate</name>
    </ligand>
</feature>
<feature type="binding site" evidence="1">
    <location>
        <begin position="222"/>
        <end position="223"/>
    </location>
    <ligand>
        <name>substrate</name>
    </ligand>
</feature>
<evidence type="ECO:0000255" key="1">
    <source>
        <dbReference type="HAMAP-Rule" id="MF_01405"/>
    </source>
</evidence>
<name>IXTPA_HELHP</name>
<keyword id="KW-0378">Hydrolase</keyword>
<keyword id="KW-0460">Magnesium</keyword>
<keyword id="KW-0479">Metal-binding</keyword>
<keyword id="KW-0546">Nucleotide metabolism</keyword>
<keyword id="KW-0547">Nucleotide-binding</keyword>
<keyword id="KW-1185">Reference proteome</keyword>